<gene>
    <name evidence="14" type="primary">SUB1</name>
    <name evidence="16" type="ORF">PBANKA_1107100</name>
</gene>
<reference evidence="17" key="1">
    <citation type="journal article" date="2014" name="BMC Biol.">
        <title>A comprehensive evaluation of rodent malaria parasite genomes and gene expression.</title>
        <authorList>
            <person name="Otto T.D."/>
            <person name="Bohme U."/>
            <person name="Jackson A.P."/>
            <person name="Hunt M."/>
            <person name="Franke-Fayard B."/>
            <person name="Hoeijmakers W.A."/>
            <person name="Religa A.A."/>
            <person name="Robertson L."/>
            <person name="Sanders M."/>
            <person name="Ogun S.A."/>
            <person name="Cunningham D."/>
            <person name="Erhart A."/>
            <person name="Billker O."/>
            <person name="Khan S.M."/>
            <person name="Stunnenberg H.G."/>
            <person name="Langhorne J."/>
            <person name="Holder A.A."/>
            <person name="Waters A.P."/>
            <person name="Newbold C.I."/>
            <person name="Pain A."/>
            <person name="Berriman M."/>
            <person name="Janse C.J."/>
        </authorList>
    </citation>
    <scope>NUCLEOTIDE SEQUENCE [LARGE SCALE GENOMIC DNA]</scope>
    <source>
        <strain evidence="17">ANKA</strain>
    </source>
</reference>
<reference evidence="14" key="2">
    <citation type="journal article" date="2013" name="J. Biol. Chem.">
        <title>In Silico screening on the three-dimensional model of the Plasmodium vivax SUB1 protease leads to the validation of a novel anti-parasite compound.</title>
        <authorList>
            <person name="Bouillon A."/>
            <person name="Giganti D."/>
            <person name="Benedet C."/>
            <person name="Gorgette O."/>
            <person name="Petres S."/>
            <person name="Crublet E."/>
            <person name="Girard-Blanc C."/>
            <person name="Witkowski B."/>
            <person name="Menard D."/>
            <person name="Nilges M."/>
            <person name="Mercereau-Puijalon O."/>
            <person name="Stoven V."/>
            <person name="Barale J.C."/>
        </authorList>
    </citation>
    <scope>CATALYTIC ACTIVITY</scope>
    <scope>PROTEOLYTIC CLEAVAGE</scope>
    <scope>CLEAVAGE SITE</scope>
</reference>
<reference evidence="14" key="3">
    <citation type="journal article" date="2013" name="J. Biol. Chem.">
        <title>A key role for Plasmodium subtilisin-like SUB1 protease in egress of malaria parasites from host hepatocytes.</title>
        <authorList>
            <person name="Tawk L."/>
            <person name="Lacroix C."/>
            <person name="Gueirard P."/>
            <person name="Kent R."/>
            <person name="Gorgette O."/>
            <person name="Thiberge S."/>
            <person name="Mercereau-Puijalon O."/>
            <person name="Menard R."/>
            <person name="Barale J.C."/>
        </authorList>
    </citation>
    <scope>FUNCTION</scope>
    <scope>DEVELOPMENTAL STAGE</scope>
    <scope>DISRUPTION PHENOTYPE</scope>
</reference>
<reference evidence="14" key="4">
    <citation type="journal article" date="2013" name="PLoS Pathog.">
        <title>The malarial serine protease SUB1 plays an essential role in parasite liver stage development.</title>
        <authorList>
            <person name="Suarez C."/>
            <person name="Volkmann K."/>
            <person name="Gomes A.R."/>
            <person name="Billker O."/>
            <person name="Blackman M.J."/>
        </authorList>
    </citation>
    <scope>FUNCTION</scope>
    <scope>SUBCELLULAR LOCATION</scope>
    <scope>DEVELOPMENTAL STAGE</scope>
    <scope>DISRUPTION PHENOTYPE</scope>
</reference>
<reference evidence="14" key="5">
    <citation type="journal article" date="2019" name="Cell. Microbiol.">
        <title>The Plasmodium berghei serine protease PbSUB1 plays an important role in male gamete egress.</title>
        <authorList>
            <person name="Pace T."/>
            <person name="Grasso F."/>
            <person name="Camarda G."/>
            <person name="Suarez C."/>
            <person name="Blackman M.J."/>
            <person name="Ponzi M."/>
            <person name="Olivieri A."/>
        </authorList>
    </citation>
    <scope>FUNCTION</scope>
    <scope>SUBCELLULAR LOCATION</scope>
    <scope>DEVELOPMENTAL STAGE</scope>
    <scope>DISRUPTION PHENOTYPE</scope>
</reference>
<evidence type="ECO:0000250" key="1">
    <source>
        <dbReference type="UniProtKB" id="Q8I0V0"/>
    </source>
</evidence>
<evidence type="ECO:0000255" key="2"/>
<evidence type="ECO:0000255" key="3">
    <source>
        <dbReference type="PROSITE-ProRule" id="PRU00498"/>
    </source>
</evidence>
<evidence type="ECO:0000255" key="4">
    <source>
        <dbReference type="PROSITE-ProRule" id="PRU01240"/>
    </source>
</evidence>
<evidence type="ECO:0000255" key="5">
    <source>
        <dbReference type="RuleBase" id="RU003355"/>
    </source>
</evidence>
<evidence type="ECO:0000269" key="6">
    <source>
    </source>
</evidence>
<evidence type="ECO:0000269" key="7">
    <source>
    </source>
</evidence>
<evidence type="ECO:0000269" key="8">
    <source>
    </source>
</evidence>
<evidence type="ECO:0000269" key="9">
    <source>
    </source>
</evidence>
<evidence type="ECO:0000303" key="10">
    <source>
    </source>
</evidence>
<evidence type="ECO:0000303" key="11">
    <source>
    </source>
</evidence>
<evidence type="ECO:0000303" key="12">
    <source>
    </source>
</evidence>
<evidence type="ECO:0000303" key="13">
    <source>
    </source>
</evidence>
<evidence type="ECO:0000305" key="14"/>
<evidence type="ECO:0000305" key="15">
    <source>
    </source>
</evidence>
<evidence type="ECO:0000312" key="16">
    <source>
        <dbReference type="EMBL" id="VUC56494.1"/>
    </source>
</evidence>
<evidence type="ECO:0000312" key="17">
    <source>
        <dbReference type="Proteomes" id="UP000074855"/>
    </source>
</evidence>
<protein>
    <recommendedName>
        <fullName evidence="12">Subtilisin-like protease 1</fullName>
        <ecNumber evidence="6">3.4.21.62</ecNumber>
    </recommendedName>
    <alternativeName>
        <fullName evidence="10 11 12 13">PbSUB1</fullName>
    </alternativeName>
</protein>
<comment type="function">
    <text evidence="7 8 9">Mediates the proteolytic maturation of serine protease SERA3 (PubMed:24089525, PubMed:30941868). Mediates the proteolytic maturation of MSP1, and thereby may prime the parasite cell surface for invasion of fresh erythrocytes (PubMed:24089525, PubMed:24348254). Required for completion of the parasite pre-erythrocytic stages (PubMed:24348254). Required for hepatic schizont development and merozoite formation (PubMed:24348254). Required for the egress of the hepatic merozoites from the parasitophorous vacuole (PubMed:24089525). Required for parasite infectivity during blood stages (PubMed:24089525). Required for male gamete egress (PubMed:30941868).</text>
</comment>
<comment type="catalytic activity">
    <reaction evidence="6">
        <text>Hydrolysis of proteins with broad specificity for peptide bonds, and a preference for a large uncharged residue in P1. Hydrolyzes peptide amides.</text>
        <dbReference type="EC" id="3.4.21.62"/>
    </reaction>
</comment>
<comment type="subcellular location">
    <subcellularLocation>
        <location evidence="1">Secreted</location>
    </subcellularLocation>
    <subcellularLocation>
        <location evidence="1">Parasitophorous vacuole lumen</location>
    </subcellularLocation>
    <subcellularLocation>
        <location evidence="9">Cytoplasmic vesicle</location>
        <location evidence="9">Secretory vesicle</location>
    </subcellularLocation>
    <text evidence="1 8 9">At the schizont stage, in merozoites, localizes to dense secretory granules called exonemes (PubMed:24348254). Just prior to egress secreted into the parasitophorous vacuole (By similarity). In male gametocytes, localizes to secretory organelles called male osmiophilic bodies (PubMed:30941868).</text>
</comment>
<comment type="developmental stage">
    <text evidence="7 8 9">Expressed in blood schizonts (at protein level) (PubMed:24089525, PubMed:24348254, PubMed:30941868). Expressed in mature hepatic schizonts (at protein level) (PubMed:24089525, PubMed:24348254). Expressed in merozoites released from infected hepatocytes (at protein level) (PubMed:24089525). Expressed in male gametocytes; up-regulated during male gamete formation (at protein level) (PubMed:30941868). Not detected in female gametocytes (at protein level) (PubMed:30941868). Not detected in mature male gametes (at protein level) (PubMed:30941868). Not detected in salivary gland sporozoites (at protein level) (PubMed:24348254). Not detected in early liver stage schizonts (at protein level) (PubMed:24348254).</text>
</comment>
<comment type="PTM">
    <text evidence="6">The N-terminal prodomain is cleaved.</text>
</comment>
<comment type="disruption phenotype">
    <text evidence="7 8 9">Attempts to disrupt the gene failed (PubMed:24348254). Conditional knockdown results in significant reduction of male gamete exflagellation rates (PubMed:30941868). Higher proportion of nonreleased male gametes (PubMed:30941868). Defects in the release and maturation of hepatic merozoites (PubMed:24089525). Impaired merosome formation (PubMed:24089525, PubMed:24348254). Blocked transition from salivary gland sporozoite to subsequent asexual blood stages (PubMed:24348254). Reduced ability to establish blood parasitemia (PubMed:24089525). Impaired hepatic schizont development and merozoite formation (PubMed:24348254). Lack of MSP1 signal in the liver stage schizonts (PubMed:24348254). Defects in SERA3 processing in liver stages (PubMed:24089525). Defects in SERA3 processing in male gametocytes (PubMed:30941868). Defects in MSP1 processing in hepatic merozoites (PubMed:24089525). No significant effects on sporozoite ability to invade hepatocytes and establish a liver stage infection (PubMed:24348254).</text>
</comment>
<comment type="similarity">
    <text evidence="4 5">Belongs to the peptidase S8 family.</text>
</comment>
<feature type="signal peptide" evidence="2">
    <location>
        <begin position="1"/>
        <end position="20"/>
    </location>
</feature>
<feature type="propeptide" id="PRO_0000461924" description="Inhibition peptide" evidence="15">
    <location>
        <begin position="21"/>
        <end position="195"/>
    </location>
</feature>
<feature type="chain" id="PRO_5021487351" description="Subtilisin-like protease 1" evidence="2">
    <location>
        <begin position="196"/>
        <end position="599"/>
    </location>
</feature>
<feature type="domain" description="Peptidase S8" evidence="4">
    <location>
        <begin position="257"/>
        <end position="574"/>
    </location>
</feature>
<feature type="coiled-coil region" evidence="2">
    <location>
        <begin position="74"/>
        <end position="101"/>
    </location>
</feature>
<feature type="active site" description="Charge relay system" evidence="4">
    <location>
        <position position="286"/>
    </location>
</feature>
<feature type="active site" description="Charge relay system" evidence="4">
    <location>
        <position position="342"/>
    </location>
</feature>
<feature type="active site" description="Charge relay system" evidence="4">
    <location>
        <position position="519"/>
    </location>
</feature>
<feature type="binding site" evidence="1">
    <location>
        <position position="123"/>
    </location>
    <ligand>
        <name>Ca(2+)</name>
        <dbReference type="ChEBI" id="CHEBI:29108"/>
        <label>4</label>
    </ligand>
</feature>
<feature type="binding site" evidence="1">
    <location>
        <position position="126"/>
    </location>
    <ligand>
        <name>Ca(2+)</name>
        <dbReference type="ChEBI" id="CHEBI:29108"/>
        <label>4</label>
    </ligand>
</feature>
<feature type="binding site" evidence="1">
    <location>
        <position position="128"/>
    </location>
    <ligand>
        <name>Ca(2+)</name>
        <dbReference type="ChEBI" id="CHEBI:29108"/>
        <label>4</label>
    </ligand>
</feature>
<feature type="binding site" evidence="1">
    <location>
        <position position="183"/>
    </location>
    <ligand>
        <name>Ca(2+)</name>
        <dbReference type="ChEBI" id="CHEBI:29108"/>
        <label>4</label>
    </ligand>
</feature>
<feature type="binding site" evidence="1">
    <location>
        <position position="251"/>
    </location>
    <ligand>
        <name>Ca(2+)</name>
        <dbReference type="ChEBI" id="CHEBI:29108"/>
        <label>1</label>
    </ligand>
</feature>
<feature type="binding site" evidence="1">
    <location>
        <position position="295"/>
    </location>
    <ligand>
        <name>Ca(2+)</name>
        <dbReference type="ChEBI" id="CHEBI:29108"/>
        <label>1</label>
    </ligand>
</feature>
<feature type="binding site" evidence="1">
    <location>
        <position position="306"/>
    </location>
    <ligand>
        <name>Ca(2+)</name>
        <dbReference type="ChEBI" id="CHEBI:29108"/>
        <label>2</label>
    </ligand>
</feature>
<feature type="binding site" evidence="1">
    <location>
        <position position="306"/>
    </location>
    <ligand>
        <name>Ca(2+)</name>
        <dbReference type="ChEBI" id="CHEBI:29108"/>
        <label>3</label>
    </ligand>
</feature>
<feature type="binding site" evidence="1">
    <location>
        <position position="314"/>
    </location>
    <ligand>
        <name>Ca(2+)</name>
        <dbReference type="ChEBI" id="CHEBI:29108"/>
        <label>3</label>
    </ligand>
</feature>
<feature type="binding site" evidence="1">
    <location>
        <position position="315"/>
    </location>
    <ligand>
        <name>Ca(2+)</name>
        <dbReference type="ChEBI" id="CHEBI:29108"/>
        <label>2</label>
    </ligand>
</feature>
<feature type="binding site" evidence="1">
    <location>
        <position position="316"/>
    </location>
    <ligand>
        <name>Ca(2+)</name>
        <dbReference type="ChEBI" id="CHEBI:29108"/>
        <label>3</label>
    </ligand>
</feature>
<feature type="binding site" evidence="1">
    <location>
        <position position="318"/>
    </location>
    <ligand>
        <name>Ca(2+)</name>
        <dbReference type="ChEBI" id="CHEBI:29108"/>
        <label>3</label>
    </ligand>
</feature>
<feature type="binding site" evidence="1">
    <location>
        <position position="320"/>
    </location>
    <ligand>
        <name>Ca(2+)</name>
        <dbReference type="ChEBI" id="CHEBI:29108"/>
        <label>3</label>
    </ligand>
</feature>
<feature type="binding site" evidence="1">
    <location>
        <position position="322"/>
    </location>
    <ligand>
        <name>Ca(2+)</name>
        <dbReference type="ChEBI" id="CHEBI:29108"/>
        <label>2</label>
    </ligand>
</feature>
<feature type="binding site" evidence="1">
    <location>
        <position position="323"/>
    </location>
    <ligand>
        <name>Ca(2+)</name>
        <dbReference type="ChEBI" id="CHEBI:29108"/>
        <label>3</label>
    </ligand>
</feature>
<feature type="binding site" evidence="1">
    <location>
        <position position="353"/>
    </location>
    <ligand>
        <name>Ca(2+)</name>
        <dbReference type="ChEBI" id="CHEBI:29108"/>
        <label>1</label>
    </ligand>
</feature>
<feature type="binding site" evidence="1">
    <location>
        <position position="356"/>
    </location>
    <ligand>
        <name>Ca(2+)</name>
        <dbReference type="ChEBI" id="CHEBI:29108"/>
        <label>1</label>
    </ligand>
</feature>
<feature type="binding site" evidence="1">
    <location>
        <position position="358"/>
    </location>
    <ligand>
        <name>Ca(2+)</name>
        <dbReference type="ChEBI" id="CHEBI:29108"/>
        <label>1</label>
    </ligand>
</feature>
<feature type="binding site" evidence="1">
    <location>
        <position position="360"/>
    </location>
    <ligand>
        <name>Ca(2+)</name>
        <dbReference type="ChEBI" id="CHEBI:29108"/>
        <label>1</label>
    </ligand>
</feature>
<feature type="site" description="Cleavage" evidence="6">
    <location>
        <begin position="195"/>
        <end position="196"/>
    </location>
</feature>
<feature type="glycosylation site" description="N-linked (GlcNAc...) asparagine" evidence="3">
    <location>
        <position position="57"/>
    </location>
</feature>
<feature type="glycosylation site" description="N-linked (GlcNAc...) asparagine" evidence="3">
    <location>
        <position position="227"/>
    </location>
</feature>
<feature type="glycosylation site" description="N-linked (GlcNAc...) asparagine" evidence="3">
    <location>
        <position position="331"/>
    </location>
</feature>
<feature type="glycosylation site" description="N-linked (GlcNAc...) asparagine" evidence="3">
    <location>
        <position position="355"/>
    </location>
</feature>
<feature type="glycosylation site" description="N-linked (GlcNAc...) asparagine" evidence="3">
    <location>
        <position position="402"/>
    </location>
</feature>
<feature type="glycosylation site" description="N-linked (GlcNAc...) asparagine" evidence="3">
    <location>
        <position position="434"/>
    </location>
</feature>
<feature type="disulfide bond" evidence="1">
    <location>
        <begin position="283"/>
        <end position="393"/>
    </location>
</feature>
<feature type="disulfide bond" evidence="1">
    <location>
        <begin position="372"/>
        <end position="389"/>
    </location>
</feature>
<feature type="disulfide bond" evidence="1">
    <location>
        <begin position="435"/>
        <end position="448"/>
    </location>
</feature>
<keyword id="KW-0106">Calcium</keyword>
<keyword id="KW-0175">Coiled coil</keyword>
<keyword id="KW-0968">Cytoplasmic vesicle</keyword>
<keyword id="KW-1015">Disulfide bond</keyword>
<keyword id="KW-0325">Glycoprotein</keyword>
<keyword id="KW-0378">Hydrolase</keyword>
<keyword id="KW-0479">Metal-binding</keyword>
<keyword id="KW-0645">Protease</keyword>
<keyword id="KW-1185">Reference proteome</keyword>
<keyword id="KW-0964">Secreted</keyword>
<keyword id="KW-0720">Serine protease</keyword>
<keyword id="KW-0732">Signal</keyword>
<keyword id="KW-0865">Zymogen</keyword>
<accession>A0A509AM03</accession>
<dbReference type="EC" id="3.4.21.62" evidence="6"/>
<dbReference type="EMBL" id="LK023126">
    <property type="protein sequence ID" value="VUC56494.1"/>
    <property type="molecule type" value="Genomic_DNA"/>
</dbReference>
<dbReference type="SMR" id="A0A509AM03"/>
<dbReference type="STRING" id="5823.A0A509AM03"/>
<dbReference type="VEuPathDB" id="PlasmoDB:PBANKA_1107100"/>
<dbReference type="InParanoid" id="A0A509AM03"/>
<dbReference type="OMA" id="YRNLQWG"/>
<dbReference type="OrthoDB" id="1330511at2759"/>
<dbReference type="Proteomes" id="UP000074855">
    <property type="component" value="Chromosome 11"/>
</dbReference>
<dbReference type="GO" id="GO:0005576">
    <property type="term" value="C:extracellular region"/>
    <property type="evidence" value="ECO:0007669"/>
    <property type="project" value="UniProtKB-SubCell"/>
</dbReference>
<dbReference type="GO" id="GO:0030133">
    <property type="term" value="C:transport vesicle"/>
    <property type="evidence" value="ECO:0007669"/>
    <property type="project" value="UniProtKB-SubCell"/>
</dbReference>
<dbReference type="GO" id="GO:0004252">
    <property type="term" value="F:serine-type endopeptidase activity"/>
    <property type="evidence" value="ECO:0007669"/>
    <property type="project" value="UniProtKB-UniRule"/>
</dbReference>
<dbReference type="GO" id="GO:0006508">
    <property type="term" value="P:proteolysis"/>
    <property type="evidence" value="ECO:0007669"/>
    <property type="project" value="UniProtKB-KW"/>
</dbReference>
<dbReference type="Gene3D" id="3.30.70.2380">
    <property type="match status" value="1"/>
</dbReference>
<dbReference type="Gene3D" id="3.40.50.200">
    <property type="entry name" value="Peptidase S8/S53 domain"/>
    <property type="match status" value="1"/>
</dbReference>
<dbReference type="InterPro" id="IPR000209">
    <property type="entry name" value="Peptidase_S8/S53_dom"/>
</dbReference>
<dbReference type="InterPro" id="IPR036852">
    <property type="entry name" value="Peptidase_S8/S53_dom_sf"/>
</dbReference>
<dbReference type="InterPro" id="IPR023827">
    <property type="entry name" value="Peptidase_S8_Asp-AS"/>
</dbReference>
<dbReference type="InterPro" id="IPR022398">
    <property type="entry name" value="Peptidase_S8_His-AS"/>
</dbReference>
<dbReference type="InterPro" id="IPR023828">
    <property type="entry name" value="Peptidase_S8_Ser-AS"/>
</dbReference>
<dbReference type="InterPro" id="IPR050131">
    <property type="entry name" value="Peptidase_S8_subtilisin-like"/>
</dbReference>
<dbReference type="InterPro" id="IPR015500">
    <property type="entry name" value="Peptidase_S8_subtilisin-rel"/>
</dbReference>
<dbReference type="InterPro" id="IPR041089">
    <property type="entry name" value="SUB1_ProdP9"/>
</dbReference>
<dbReference type="PANTHER" id="PTHR43806:SF11">
    <property type="entry name" value="CEREVISIN-RELATED"/>
    <property type="match status" value="1"/>
</dbReference>
<dbReference type="PANTHER" id="PTHR43806">
    <property type="entry name" value="PEPTIDASE S8"/>
    <property type="match status" value="1"/>
</dbReference>
<dbReference type="Pfam" id="PF00082">
    <property type="entry name" value="Peptidase_S8"/>
    <property type="match status" value="1"/>
</dbReference>
<dbReference type="Pfam" id="PF18213">
    <property type="entry name" value="SUB1_ProdP9"/>
    <property type="match status" value="1"/>
</dbReference>
<dbReference type="PRINTS" id="PR00723">
    <property type="entry name" value="SUBTILISIN"/>
</dbReference>
<dbReference type="SUPFAM" id="SSF52743">
    <property type="entry name" value="Subtilisin-like"/>
    <property type="match status" value="1"/>
</dbReference>
<dbReference type="PROSITE" id="PS51892">
    <property type="entry name" value="SUBTILASE"/>
    <property type="match status" value="1"/>
</dbReference>
<dbReference type="PROSITE" id="PS00136">
    <property type="entry name" value="SUBTILASE_ASP"/>
    <property type="match status" value="1"/>
</dbReference>
<dbReference type="PROSITE" id="PS00137">
    <property type="entry name" value="SUBTILASE_HIS"/>
    <property type="match status" value="1"/>
</dbReference>
<dbReference type="PROSITE" id="PS00138">
    <property type="entry name" value="SUBTILASE_SER"/>
    <property type="match status" value="1"/>
</dbReference>
<name>SUB1_PLABA</name>
<sequence>MRTVFIYACIISLVLRTIPAHNDLMSKEKENKEKDVHKIIEDLRFLEKVDAILENSNMTIDDVKADADAYNPDEDAPKEELNKIEMEKKKAEEEAKNSKKKILERYLLDEKKKKSLRLIVSENHATSPSFFEESLIQEDFMSFIQSKGEIVNLKNLKSMIIELNSDMTDKELEAYITLLKKKGAHVESDELVGADSIYVDIIKDAVKRGDTSINFKKMQSNMLEVENKTYEKLNNNLKKSKNSYKKSFFNDEYRNLQWGLDLARLDDAQEMITTNSVETTKICVIDSGIDYNHPDLKGNIYVNLNELNGKEGIDDDNNGIIDDIYGVNYVNNTGDPWDDHNHGSHVSGIISAIGNNSIGVVGVNPSSKLVICKALDDKKLGRLGNIFKCIDYCINKKVNIINGSFSFDEYSTIFSSTIEYLARLGILFVVSSSNCSHPPSSIPDITRCDLSVNSKYPSVLSTQYDNMVVVANLKKKINGEYDISINSFYSDIYCQVSAPGANIYSTASRGSYMELSGTSMAAPHVAGIASIILSINPDLTYKQVVNILKNSVVKLSSHKNKIAWGGYIDILNAVKNAISSKNSYIRFQGIRMWKSKKRN</sequence>
<proteinExistence type="evidence at protein level"/>
<organism evidence="17">
    <name type="scientific">Plasmodium berghei (strain Anka)</name>
    <dbReference type="NCBI Taxonomy" id="5823"/>
    <lineage>
        <taxon>Eukaryota</taxon>
        <taxon>Sar</taxon>
        <taxon>Alveolata</taxon>
        <taxon>Apicomplexa</taxon>
        <taxon>Aconoidasida</taxon>
        <taxon>Haemosporida</taxon>
        <taxon>Plasmodiidae</taxon>
        <taxon>Plasmodium</taxon>
        <taxon>Plasmodium (Vinckeia)</taxon>
    </lineage>
</organism>